<reference key="1">
    <citation type="journal article" date="2014" name="PLoS Genet.">
        <title>Analysis of the genome and transcriptome of Cryptococcus neoformans var. grubii reveals complex RNA expression and microevolution leading to virulence attenuation.</title>
        <authorList>
            <person name="Janbon G."/>
            <person name="Ormerod K.L."/>
            <person name="Paulet D."/>
            <person name="Byrnes E.J. III"/>
            <person name="Yadav V."/>
            <person name="Chatterjee G."/>
            <person name="Mullapudi N."/>
            <person name="Hon C.-C."/>
            <person name="Billmyre R.B."/>
            <person name="Brunel F."/>
            <person name="Bahn Y.-S."/>
            <person name="Chen W."/>
            <person name="Chen Y."/>
            <person name="Chow E.W.L."/>
            <person name="Coppee J.-Y."/>
            <person name="Floyd-Averette A."/>
            <person name="Gaillardin C."/>
            <person name="Gerik K.J."/>
            <person name="Goldberg J."/>
            <person name="Gonzalez-Hilarion S."/>
            <person name="Gujja S."/>
            <person name="Hamlin J.L."/>
            <person name="Hsueh Y.-P."/>
            <person name="Ianiri G."/>
            <person name="Jones S."/>
            <person name="Kodira C.D."/>
            <person name="Kozubowski L."/>
            <person name="Lam W."/>
            <person name="Marra M."/>
            <person name="Mesner L.D."/>
            <person name="Mieczkowski P.A."/>
            <person name="Moyrand F."/>
            <person name="Nielsen K."/>
            <person name="Proux C."/>
            <person name="Rossignol T."/>
            <person name="Schein J.E."/>
            <person name="Sun S."/>
            <person name="Wollschlaeger C."/>
            <person name="Wood I.A."/>
            <person name="Zeng Q."/>
            <person name="Neuveglise C."/>
            <person name="Newlon C.S."/>
            <person name="Perfect J.R."/>
            <person name="Lodge J.K."/>
            <person name="Idnurm A."/>
            <person name="Stajich J.E."/>
            <person name="Kronstad J.W."/>
            <person name="Sanyal K."/>
            <person name="Heitman J."/>
            <person name="Fraser J.A."/>
            <person name="Cuomo C.A."/>
            <person name="Dietrich F.S."/>
        </authorList>
    </citation>
    <scope>NUCLEOTIDE SEQUENCE [LARGE SCALE GENOMIC DNA]</scope>
    <source>
        <strain>H99 / ATCC 208821 / CBS 10515 / FGSC 9487</strain>
    </source>
</reference>
<reference key="2">
    <citation type="journal article" date="2011" name="Mol. Microbiol.">
        <title>The copper regulon of the human fungal pathogen Cryptococcus neoformans H99.</title>
        <authorList>
            <person name="Ding C."/>
            <person name="Yin J."/>
            <person name="Tovar E.M."/>
            <person name="Fitzpatrick D.A."/>
            <person name="Higgins D.G."/>
            <person name="Thiele D.J."/>
        </authorList>
    </citation>
    <scope>FUNCTION</scope>
    <scope>INDUCTION</scope>
</reference>
<reference key="3">
    <citation type="journal article" date="2013" name="Cell Host Microbe">
        <title>Cryptococcus neoformans copper detoxification machinery is critical for fungal virulence.</title>
        <authorList>
            <person name="Ding C."/>
            <person name="Festa R.A."/>
            <person name="Chen Y.L."/>
            <person name="Espart A."/>
            <person name="Palacios O."/>
            <person name="Espin J."/>
            <person name="Capdevila M."/>
            <person name="Atrian S."/>
            <person name="Heitman J."/>
            <person name="Thiele D.J."/>
        </authorList>
    </citation>
    <scope>FUNCTION</scope>
    <scope>INDUCTION</scope>
    <scope>DISRUPTION PHENOTYPE</scope>
    <scope>DOMAIN</scope>
    <scope>COPPER-BINDING</scope>
    <scope>SUBCELLULAR LOCATION</scope>
</reference>
<reference key="4">
    <citation type="journal article" date="2019" name="BMC Microbiol.">
        <title>Increase of reactive oxygen species contributes to growth inhibition by fluconazole in Cryptococcus neoformans.</title>
        <authorList>
            <person name="Dbouk N.H."/>
            <person name="Covington M.B."/>
            <person name="Nguyen K."/>
            <person name="Chandrasekaran S."/>
        </authorList>
    </citation>
    <scope>FUNCTION</scope>
    <scope>DISRUPTION PHENOTYPE</scope>
</reference>
<name>CMT2_CRYNH</name>
<keyword id="KW-0186">Copper</keyword>
<keyword id="KW-0963">Cytoplasm</keyword>
<keyword id="KW-0479">Metal-binding</keyword>
<keyword id="KW-0480">Metal-thiolate cluster</keyword>
<keyword id="KW-0677">Repeat</keyword>
<comment type="function">
    <text evidence="1 2 3">Copper metallothionein that protects the cell against copper toxicity by tightly chelating copper ions (PubMed:21819456, PubMed:23498952). Required for antioxidant-mediated growth rescue in the presence of fluconazole (PubMed:31694529). Acts as a critical factors for lung colonization and virulence (PubMed:23498952).</text>
</comment>
<comment type="subcellular location">
    <subcellularLocation>
        <location evidence="2">Cytoplasm</location>
        <location evidence="2">Cell cortex</location>
    </subcellularLocation>
</comment>
<comment type="induction">
    <text evidence="1 2">Expression is induced in a dose-dependent manner in response to high concentrations of copper and basal transcription is repressed in the presence of the copper chelator bathocuproin sulphonate (BCS) (PubMed:21819456). Expression is regulated by the CUF1 copper-dependent transcription factor (PubMed:21819456). Highly induced during mice pulmonary infection (PubMed:23498952).</text>
</comment>
<comment type="domain">
    <text evidence="2">Divided into 5 Cys-rich domains by 4 spacer sequences termed B1-B4 (PubMed:23498952). Each cystein-rich domain contains the conserved copper-binding motif Cys-X-Cys-X6-Cys-X-Cys-X4-Cys-X-Cys-X2-Cys (PubMed:23498952). The copper-binding domains together are able to chelate up to 24 copper ions (PubMed:23498952).</text>
</comment>
<comment type="disruption phenotype">
    <text evidence="2 3">Fungi lacking both CMT1 and CMT2 whow attenuated virulence and reduced pulmonary colonization in mice (PubMed:23498952). Impairs growth rescue by antioxidants when cells are treated with fluconazole (PubMed:31694529).</text>
</comment>
<comment type="similarity">
    <text evidence="6">Belongs to the metallothionein superfamily.</text>
</comment>
<evidence type="ECO:0000269" key="1">
    <source>
    </source>
</evidence>
<evidence type="ECO:0000269" key="2">
    <source>
    </source>
</evidence>
<evidence type="ECO:0000269" key="3">
    <source>
    </source>
</evidence>
<evidence type="ECO:0000303" key="4">
    <source>
    </source>
</evidence>
<evidence type="ECO:0000303" key="5">
    <source>
    </source>
</evidence>
<evidence type="ECO:0000305" key="6"/>
<evidence type="ECO:0000305" key="7">
    <source>
    </source>
</evidence>
<accession>J9VL95</accession>
<organism>
    <name type="scientific">Cryptococcus neoformans var. grubii serotype A (strain H99 / ATCC 208821 / CBS 10515 / FGSC 9487)</name>
    <name type="common">Filobasidiella neoformans var. grubii</name>
    <dbReference type="NCBI Taxonomy" id="235443"/>
    <lineage>
        <taxon>Eukaryota</taxon>
        <taxon>Fungi</taxon>
        <taxon>Dikarya</taxon>
        <taxon>Basidiomycota</taxon>
        <taxon>Agaricomycotina</taxon>
        <taxon>Tremellomycetes</taxon>
        <taxon>Tremellales</taxon>
        <taxon>Cryptococcaceae</taxon>
        <taxon>Cryptococcus</taxon>
        <taxon>Cryptococcus neoformans species complex</taxon>
    </lineage>
</organism>
<sequence length="183" mass="17832">MAFNPNPEKTTSCCSTSKAQDKCTCPKGKCECETCPKSTKTPGSGPCNCGVKEKVSTCGCNGSGAACTCPPGQCACDSCPRKAKSVSTCGCGGSAAACSCPPGKCACDSCPKQAQEKVSSCACNGSGGACTCPPGKCSCSGCPAQAKENPADQPTTCGCQGVGVACTCPPGQCACDGCPAKAK</sequence>
<proteinExistence type="evidence at protein level"/>
<dbReference type="EMBL" id="CP003820">
    <property type="protein sequence ID" value="AFR92440.2"/>
    <property type="molecule type" value="Genomic_DNA"/>
</dbReference>
<dbReference type="RefSeq" id="XP_012046252.1">
    <property type="nucleotide sequence ID" value="XM_012190862.1"/>
</dbReference>
<dbReference type="GeneID" id="23884125"/>
<dbReference type="KEGG" id="cng:CNAG_00306"/>
<dbReference type="VEuPathDB" id="FungiDB:CNAG_00306"/>
<dbReference type="HOGENOM" id="CLU_146153_0_0_1"/>
<dbReference type="OrthoDB" id="6288at5206"/>
<dbReference type="Proteomes" id="UP000010091">
    <property type="component" value="Chromosome 1"/>
</dbReference>
<dbReference type="GO" id="GO:0005938">
    <property type="term" value="C:cell cortex"/>
    <property type="evidence" value="ECO:0007669"/>
    <property type="project" value="UniProtKB-SubCell"/>
</dbReference>
<dbReference type="GO" id="GO:0046872">
    <property type="term" value="F:metal ion binding"/>
    <property type="evidence" value="ECO:0007669"/>
    <property type="project" value="UniProtKB-KW"/>
</dbReference>
<gene>
    <name evidence="5" type="primary">CMT2</name>
    <name type="ORF">CNAG_00306</name>
</gene>
<protein>
    <recommendedName>
        <fullName evidence="4">Copper metallothionein 2</fullName>
        <shortName evidence="4">Cu-MT 2</shortName>
        <shortName evidence="4">Cu-metallothionein 2</shortName>
    </recommendedName>
    <alternativeName>
        <fullName evidence="6">Copper chelatin 2</fullName>
    </alternativeName>
    <alternativeName>
        <fullName evidence="6">Copper thionein 2</fullName>
    </alternativeName>
</protein>
<feature type="chain" id="PRO_0000449497" description="Copper metallothionein 2">
    <location>
        <begin position="1"/>
        <end position="183"/>
    </location>
</feature>
<feature type="region of interest" description="Cys-rich copper-binding 1" evidence="7">
    <location>
        <begin position="1"/>
        <end position="35"/>
    </location>
</feature>
<feature type="region of interest" description="Spacer B1" evidence="7">
    <location>
        <begin position="36"/>
        <end position="45"/>
    </location>
</feature>
<feature type="region of interest" description="Cys-rich copper-binding 2" evidence="7">
    <location>
        <begin position="46"/>
        <end position="79"/>
    </location>
</feature>
<feature type="region of interest" description="Spacer B2" evidence="7">
    <location>
        <begin position="80"/>
        <end position="88"/>
    </location>
</feature>
<feature type="region of interest" description="Cys-rich copper-binding 3" evidence="7">
    <location>
        <begin position="89"/>
        <end position="110"/>
    </location>
</feature>
<feature type="region of interest" description="Spacer B3" evidence="7">
    <location>
        <begin position="111"/>
        <end position="120"/>
    </location>
</feature>
<feature type="region of interest" description="Cys-rich copper-binding 4" evidence="7">
    <location>
        <begin position="121"/>
        <end position="142"/>
    </location>
</feature>
<feature type="region of interest" description="Spacer B4" evidence="7">
    <location>
        <begin position="143"/>
        <end position="156"/>
    </location>
</feature>
<feature type="region of interest" description="Cys-rich copper-binding 5" evidence="7">
    <location>
        <begin position="157"/>
        <end position="183"/>
    </location>
</feature>